<comment type="function">
    <text evidence="1">Catalyzes the decarboxylation of four acetate groups of uroporphyrinogen-III to yield coproporphyrinogen-III.</text>
</comment>
<comment type="catalytic activity">
    <reaction evidence="1">
        <text>uroporphyrinogen III + 4 H(+) = coproporphyrinogen III + 4 CO2</text>
        <dbReference type="Rhea" id="RHEA:19865"/>
        <dbReference type="ChEBI" id="CHEBI:15378"/>
        <dbReference type="ChEBI" id="CHEBI:16526"/>
        <dbReference type="ChEBI" id="CHEBI:57308"/>
        <dbReference type="ChEBI" id="CHEBI:57309"/>
        <dbReference type="EC" id="4.1.1.37"/>
    </reaction>
</comment>
<comment type="pathway">
    <text evidence="1">Porphyrin-containing compound metabolism; protoporphyrin-IX biosynthesis; coproporphyrinogen-III from 5-aminolevulinate: step 4/4.</text>
</comment>
<comment type="subunit">
    <text evidence="1">Homodimer.</text>
</comment>
<comment type="subcellular location">
    <subcellularLocation>
        <location evidence="1">Cytoplasm</location>
    </subcellularLocation>
</comment>
<comment type="similarity">
    <text evidence="1">Belongs to the uroporphyrinogen decarboxylase family.</text>
</comment>
<reference key="1">
    <citation type="journal article" date="2001" name="Nature">
        <title>Genome sequence of Yersinia pestis, the causative agent of plague.</title>
        <authorList>
            <person name="Parkhill J."/>
            <person name="Wren B.W."/>
            <person name="Thomson N.R."/>
            <person name="Titball R.W."/>
            <person name="Holden M.T.G."/>
            <person name="Prentice M.B."/>
            <person name="Sebaihia M."/>
            <person name="James K.D."/>
            <person name="Churcher C.M."/>
            <person name="Mungall K.L."/>
            <person name="Baker S."/>
            <person name="Basham D."/>
            <person name="Bentley S.D."/>
            <person name="Brooks K."/>
            <person name="Cerdeno-Tarraga A.-M."/>
            <person name="Chillingworth T."/>
            <person name="Cronin A."/>
            <person name="Davies R.M."/>
            <person name="Davis P."/>
            <person name="Dougan G."/>
            <person name="Feltwell T."/>
            <person name="Hamlin N."/>
            <person name="Holroyd S."/>
            <person name="Jagels K."/>
            <person name="Karlyshev A.V."/>
            <person name="Leather S."/>
            <person name="Moule S."/>
            <person name="Oyston P.C.F."/>
            <person name="Quail M.A."/>
            <person name="Rutherford K.M."/>
            <person name="Simmonds M."/>
            <person name="Skelton J."/>
            <person name="Stevens K."/>
            <person name="Whitehead S."/>
            <person name="Barrell B.G."/>
        </authorList>
    </citation>
    <scope>NUCLEOTIDE SEQUENCE [LARGE SCALE GENOMIC DNA]</scope>
    <source>
        <strain>CO-92 / Biovar Orientalis</strain>
    </source>
</reference>
<reference key="2">
    <citation type="journal article" date="2002" name="J. Bacteriol.">
        <title>Genome sequence of Yersinia pestis KIM.</title>
        <authorList>
            <person name="Deng W."/>
            <person name="Burland V."/>
            <person name="Plunkett G. III"/>
            <person name="Boutin A."/>
            <person name="Mayhew G.F."/>
            <person name="Liss P."/>
            <person name="Perna N.T."/>
            <person name="Rose D.J."/>
            <person name="Mau B."/>
            <person name="Zhou S."/>
            <person name="Schwartz D.C."/>
            <person name="Fetherston J.D."/>
            <person name="Lindler L.E."/>
            <person name="Brubaker R.R."/>
            <person name="Plano G.V."/>
            <person name="Straley S.C."/>
            <person name="McDonough K.A."/>
            <person name="Nilles M.L."/>
            <person name="Matson J.S."/>
            <person name="Blattner F.R."/>
            <person name="Perry R.D."/>
        </authorList>
    </citation>
    <scope>NUCLEOTIDE SEQUENCE [LARGE SCALE GENOMIC DNA]</scope>
    <source>
        <strain>KIM10+ / Biovar Mediaevalis</strain>
    </source>
</reference>
<reference key="3">
    <citation type="journal article" date="2004" name="DNA Res.">
        <title>Complete genome sequence of Yersinia pestis strain 91001, an isolate avirulent to humans.</title>
        <authorList>
            <person name="Song Y."/>
            <person name="Tong Z."/>
            <person name="Wang J."/>
            <person name="Wang L."/>
            <person name="Guo Z."/>
            <person name="Han Y."/>
            <person name="Zhang J."/>
            <person name="Pei D."/>
            <person name="Zhou D."/>
            <person name="Qin H."/>
            <person name="Pang X."/>
            <person name="Han Y."/>
            <person name="Zhai J."/>
            <person name="Li M."/>
            <person name="Cui B."/>
            <person name="Qi Z."/>
            <person name="Jin L."/>
            <person name="Dai R."/>
            <person name="Chen F."/>
            <person name="Li S."/>
            <person name="Ye C."/>
            <person name="Du Z."/>
            <person name="Lin W."/>
            <person name="Wang J."/>
            <person name="Yu J."/>
            <person name="Yang H."/>
            <person name="Wang J."/>
            <person name="Huang P."/>
            <person name="Yang R."/>
        </authorList>
    </citation>
    <scope>NUCLEOTIDE SEQUENCE [LARGE SCALE GENOMIC DNA]</scope>
    <source>
        <strain>91001 / Biovar Mediaevalis</strain>
    </source>
</reference>
<dbReference type="EC" id="4.1.1.37" evidence="1"/>
<dbReference type="EMBL" id="AL590842">
    <property type="protein sequence ID" value="CAL22321.1"/>
    <property type="molecule type" value="Genomic_DNA"/>
</dbReference>
<dbReference type="EMBL" id="AE009952">
    <property type="protein sequence ID" value="AAM84085.1"/>
    <property type="molecule type" value="Genomic_DNA"/>
</dbReference>
<dbReference type="EMBL" id="AE017042">
    <property type="protein sequence ID" value="AAS63267.1"/>
    <property type="molecule type" value="Genomic_DNA"/>
</dbReference>
<dbReference type="PIR" id="AF0454">
    <property type="entry name" value="AF0454"/>
</dbReference>
<dbReference type="RefSeq" id="WP_002210686.1">
    <property type="nucleotide sequence ID" value="NZ_WUCM01000097.1"/>
</dbReference>
<dbReference type="RefSeq" id="YP_002348614.1">
    <property type="nucleotide sequence ID" value="NC_003143.1"/>
</dbReference>
<dbReference type="SMR" id="Q8ZAQ7"/>
<dbReference type="STRING" id="214092.YPO3734"/>
<dbReference type="PaxDb" id="214092-YPO3734"/>
<dbReference type="DNASU" id="1145443"/>
<dbReference type="EnsemblBacteria" id="AAS63267">
    <property type="protein sequence ID" value="AAS63267"/>
    <property type="gene ID" value="YP_3097"/>
</dbReference>
<dbReference type="GeneID" id="57974983"/>
<dbReference type="KEGG" id="ype:YPO3734"/>
<dbReference type="KEGG" id="ypk:y0496"/>
<dbReference type="KEGG" id="ypm:YP_3097"/>
<dbReference type="PATRIC" id="fig|214092.21.peg.4252"/>
<dbReference type="eggNOG" id="COG0407">
    <property type="taxonomic scope" value="Bacteria"/>
</dbReference>
<dbReference type="HOGENOM" id="CLU_040933_0_0_6"/>
<dbReference type="OMA" id="LWLMRQA"/>
<dbReference type="OrthoDB" id="9806656at2"/>
<dbReference type="UniPathway" id="UPA00251">
    <property type="reaction ID" value="UER00321"/>
</dbReference>
<dbReference type="Proteomes" id="UP000000815">
    <property type="component" value="Chromosome"/>
</dbReference>
<dbReference type="Proteomes" id="UP000001019">
    <property type="component" value="Chromosome"/>
</dbReference>
<dbReference type="Proteomes" id="UP000002490">
    <property type="component" value="Chromosome"/>
</dbReference>
<dbReference type="GO" id="GO:0005829">
    <property type="term" value="C:cytosol"/>
    <property type="evidence" value="ECO:0000318"/>
    <property type="project" value="GO_Central"/>
</dbReference>
<dbReference type="GO" id="GO:0004853">
    <property type="term" value="F:uroporphyrinogen decarboxylase activity"/>
    <property type="evidence" value="ECO:0000318"/>
    <property type="project" value="GO_Central"/>
</dbReference>
<dbReference type="GO" id="GO:0006783">
    <property type="term" value="P:heme biosynthetic process"/>
    <property type="evidence" value="ECO:0000318"/>
    <property type="project" value="GO_Central"/>
</dbReference>
<dbReference type="GO" id="GO:0019353">
    <property type="term" value="P:protoporphyrinogen IX biosynthetic process from glutamate"/>
    <property type="evidence" value="ECO:0000318"/>
    <property type="project" value="GO_Central"/>
</dbReference>
<dbReference type="CDD" id="cd00717">
    <property type="entry name" value="URO-D"/>
    <property type="match status" value="1"/>
</dbReference>
<dbReference type="FunFam" id="3.20.20.210:FF:000001">
    <property type="entry name" value="Uroporphyrinogen decarboxylase"/>
    <property type="match status" value="1"/>
</dbReference>
<dbReference type="Gene3D" id="3.20.20.210">
    <property type="match status" value="1"/>
</dbReference>
<dbReference type="HAMAP" id="MF_00218">
    <property type="entry name" value="URO_D"/>
    <property type="match status" value="1"/>
</dbReference>
<dbReference type="InterPro" id="IPR038071">
    <property type="entry name" value="UROD/MetE-like_sf"/>
</dbReference>
<dbReference type="InterPro" id="IPR006361">
    <property type="entry name" value="Uroporphyrinogen_deCO2ase_HemE"/>
</dbReference>
<dbReference type="InterPro" id="IPR000257">
    <property type="entry name" value="Uroporphyrinogen_deCOase"/>
</dbReference>
<dbReference type="NCBIfam" id="TIGR01464">
    <property type="entry name" value="hemE"/>
    <property type="match status" value="1"/>
</dbReference>
<dbReference type="PANTHER" id="PTHR21091">
    <property type="entry name" value="METHYLTETRAHYDROFOLATE:HOMOCYSTEINE METHYLTRANSFERASE RELATED"/>
    <property type="match status" value="1"/>
</dbReference>
<dbReference type="PANTHER" id="PTHR21091:SF169">
    <property type="entry name" value="UROPORPHYRINOGEN DECARBOXYLASE"/>
    <property type="match status" value="1"/>
</dbReference>
<dbReference type="Pfam" id="PF01208">
    <property type="entry name" value="URO-D"/>
    <property type="match status" value="1"/>
</dbReference>
<dbReference type="SUPFAM" id="SSF51726">
    <property type="entry name" value="UROD/MetE-like"/>
    <property type="match status" value="1"/>
</dbReference>
<dbReference type="PROSITE" id="PS00906">
    <property type="entry name" value="UROD_1"/>
    <property type="match status" value="1"/>
</dbReference>
<dbReference type="PROSITE" id="PS00907">
    <property type="entry name" value="UROD_2"/>
    <property type="match status" value="1"/>
</dbReference>
<evidence type="ECO:0000255" key="1">
    <source>
        <dbReference type="HAMAP-Rule" id="MF_00218"/>
    </source>
</evidence>
<sequence>MNELKNDRYLRALLRQPVDMTPVWMMRQAGRYLPEYKATRAIAGDFMSLCKNAELACEVTMQPLRRYPLDAAILFSDILTIPDAMGLGLYFETGEGPRFQSPITCRADVEKLPIPDPEQELGYVMNAVRTIRRELAGSVPLIGFSGSPWTLATYMVEGGSSKAFTKLKKMMYAEPQTLHLLLDKLADSVILYLNAQIKAGAQSVMIFDTWGGVLTGRDYHEFSLNYMHKIVDGLIRENEGRRVPVTLFTKGGGPWLEAMAATGCDALGLDWTTDIADARRRVGDKVALQGNMDPSVLYAPPARIEQEVSTILASFGQGEGHVFNLGHGIHQDVPPAHAGAFVNAVHALSRPYHQK</sequence>
<proteinExistence type="inferred from homology"/>
<keyword id="KW-0963">Cytoplasm</keyword>
<keyword id="KW-0210">Decarboxylase</keyword>
<keyword id="KW-0456">Lyase</keyword>
<keyword id="KW-0627">Porphyrin biosynthesis</keyword>
<keyword id="KW-1185">Reference proteome</keyword>
<accession>Q8ZAQ7</accession>
<accession>Q0WAS4</accession>
<name>DCUP_YERPE</name>
<feature type="chain" id="PRO_0000187666" description="Uroporphyrinogen decarboxylase">
    <location>
        <begin position="1"/>
        <end position="355"/>
    </location>
</feature>
<feature type="binding site" evidence="1">
    <location>
        <begin position="27"/>
        <end position="31"/>
    </location>
    <ligand>
        <name>substrate</name>
    </ligand>
</feature>
<feature type="binding site" evidence="1">
    <location>
        <position position="46"/>
    </location>
    <ligand>
        <name>substrate</name>
    </ligand>
</feature>
<feature type="binding site" evidence="1">
    <location>
        <position position="77"/>
    </location>
    <ligand>
        <name>substrate</name>
    </ligand>
</feature>
<feature type="binding site" evidence="1">
    <location>
        <position position="154"/>
    </location>
    <ligand>
        <name>substrate</name>
    </ligand>
</feature>
<feature type="binding site" evidence="1">
    <location>
        <position position="209"/>
    </location>
    <ligand>
        <name>substrate</name>
    </ligand>
</feature>
<feature type="binding site" evidence="1">
    <location>
        <position position="327"/>
    </location>
    <ligand>
        <name>substrate</name>
    </ligand>
</feature>
<feature type="site" description="Transition state stabilizer" evidence="1">
    <location>
        <position position="77"/>
    </location>
</feature>
<protein>
    <recommendedName>
        <fullName evidence="1">Uroporphyrinogen decarboxylase</fullName>
        <shortName evidence="1">UPD</shortName>
        <shortName evidence="1">URO-D</shortName>
        <ecNumber evidence="1">4.1.1.37</ecNumber>
    </recommendedName>
</protein>
<gene>
    <name evidence="1" type="primary">hemE</name>
    <name type="ordered locus">YPO3734</name>
    <name type="ordered locus">y0496</name>
    <name type="ordered locus">YP_3097</name>
</gene>
<organism>
    <name type="scientific">Yersinia pestis</name>
    <dbReference type="NCBI Taxonomy" id="632"/>
    <lineage>
        <taxon>Bacteria</taxon>
        <taxon>Pseudomonadati</taxon>
        <taxon>Pseudomonadota</taxon>
        <taxon>Gammaproteobacteria</taxon>
        <taxon>Enterobacterales</taxon>
        <taxon>Yersiniaceae</taxon>
        <taxon>Yersinia</taxon>
    </lineage>
</organism>